<organism>
    <name type="scientific">Rattus norvegicus</name>
    <name type="common">Rat</name>
    <dbReference type="NCBI Taxonomy" id="10116"/>
    <lineage>
        <taxon>Eukaryota</taxon>
        <taxon>Metazoa</taxon>
        <taxon>Chordata</taxon>
        <taxon>Craniata</taxon>
        <taxon>Vertebrata</taxon>
        <taxon>Euteleostomi</taxon>
        <taxon>Mammalia</taxon>
        <taxon>Eutheria</taxon>
        <taxon>Euarchontoglires</taxon>
        <taxon>Glires</taxon>
        <taxon>Rodentia</taxon>
        <taxon>Myomorpha</taxon>
        <taxon>Muroidea</taxon>
        <taxon>Muridae</taxon>
        <taxon>Murinae</taxon>
        <taxon>Rattus</taxon>
    </lineage>
</organism>
<evidence type="ECO:0000269" key="1">
    <source>
    </source>
</evidence>
<evidence type="ECO:0000269" key="2">
    <source>
    </source>
</evidence>
<evidence type="ECO:0000305" key="3"/>
<evidence type="ECO:0007744" key="4">
    <source>
    </source>
</evidence>
<accession>Q8VHT6</accession>
<protein>
    <recommendedName>
        <fullName>Arsenite methyltransferase</fullName>
        <ecNumber evidence="1">2.1.1.137</ecNumber>
    </recommendedName>
    <alternativeName>
        <fullName>Methylarsonite methyltransferase</fullName>
    </alternativeName>
    <alternativeName>
        <fullName>S-adenosyl-L-methionine:arsenic(III) methyltransferase</fullName>
    </alternativeName>
</protein>
<comment type="function">
    <text evidence="1">Catalyzes the transfer of a methyl group from AdoMet to trivalent arsenicals producing methylated and dimethylated arsenicals. It methylates arsenite to form methylarsonate, Me-AsO(3)H(2), which is reduced by methylarsonate reductase to methylarsonite, Me-As(OH)2. Methylarsonite is also a substrate and it is converted into the much less toxic compound dimethylarsinate (cacodylate), Me(2)As(O)-OH.</text>
</comment>
<comment type="catalytic activity">
    <reaction evidence="1">
        <text>arsenic triglutathione + [thioredoxin]-dithiol + S-adenosyl-L-methionine + 2 H2O = methylarsonous acid + [thioredoxin]-disulfide + 3 glutathione + S-adenosyl-L-homocysteine + H(+)</text>
        <dbReference type="Rhea" id="RHEA:69460"/>
        <dbReference type="Rhea" id="RHEA-COMP:10698"/>
        <dbReference type="Rhea" id="RHEA-COMP:10700"/>
        <dbReference type="ChEBI" id="CHEBI:15377"/>
        <dbReference type="ChEBI" id="CHEBI:15378"/>
        <dbReference type="ChEBI" id="CHEBI:17826"/>
        <dbReference type="ChEBI" id="CHEBI:29950"/>
        <dbReference type="ChEBI" id="CHEBI:50058"/>
        <dbReference type="ChEBI" id="CHEBI:57856"/>
        <dbReference type="ChEBI" id="CHEBI:57925"/>
        <dbReference type="ChEBI" id="CHEBI:59789"/>
        <dbReference type="ChEBI" id="CHEBI:183640"/>
        <dbReference type="EC" id="2.1.1.137"/>
    </reaction>
</comment>
<comment type="catalytic activity">
    <reaction evidence="1">
        <text>arsenic triglutathione + 2 [thioredoxin]-dithiol + 2 S-adenosyl-L-methionine + H2O = dimethylarsinous acid + 2 [thioredoxin]-disulfide + 3 glutathione + 2 S-adenosyl-L-homocysteine + 2 H(+)</text>
        <dbReference type="Rhea" id="RHEA:69464"/>
        <dbReference type="Rhea" id="RHEA-COMP:10698"/>
        <dbReference type="Rhea" id="RHEA-COMP:10700"/>
        <dbReference type="ChEBI" id="CHEBI:15377"/>
        <dbReference type="ChEBI" id="CHEBI:15378"/>
        <dbReference type="ChEBI" id="CHEBI:23808"/>
        <dbReference type="ChEBI" id="CHEBI:29950"/>
        <dbReference type="ChEBI" id="CHEBI:50058"/>
        <dbReference type="ChEBI" id="CHEBI:57856"/>
        <dbReference type="ChEBI" id="CHEBI:57925"/>
        <dbReference type="ChEBI" id="CHEBI:59789"/>
        <dbReference type="ChEBI" id="CHEBI:183640"/>
        <dbReference type="EC" id="2.1.1.137"/>
    </reaction>
</comment>
<comment type="catalytic activity">
    <reaction evidence="1">
        <text>arsenic triglutathione + 3 [thioredoxin]-dithiol + 3 S-adenosyl-L-methionine = trimethylarsine + 3 [thioredoxin]-disulfide + 3 glutathione + 3 S-adenosyl-L-homocysteine + 3 H(+)</text>
        <dbReference type="Rhea" id="RHEA:69432"/>
        <dbReference type="Rhea" id="RHEA-COMP:10698"/>
        <dbReference type="Rhea" id="RHEA-COMP:10700"/>
        <dbReference type="ChEBI" id="CHEBI:15378"/>
        <dbReference type="ChEBI" id="CHEBI:27130"/>
        <dbReference type="ChEBI" id="CHEBI:29950"/>
        <dbReference type="ChEBI" id="CHEBI:50058"/>
        <dbReference type="ChEBI" id="CHEBI:57856"/>
        <dbReference type="ChEBI" id="CHEBI:57925"/>
        <dbReference type="ChEBI" id="CHEBI:59789"/>
        <dbReference type="ChEBI" id="CHEBI:183640"/>
        <dbReference type="EC" id="2.1.1.137"/>
    </reaction>
</comment>
<comment type="subcellular location">
    <subcellularLocation>
        <location evidence="1">Cytoplasm</location>
        <location evidence="1">Cytosol</location>
    </subcellularLocation>
</comment>
<comment type="similarity">
    <text evidence="3">Belongs to the methyltransferase superfamily. Arsenite methyltransferase family.</text>
</comment>
<gene>
    <name type="primary">As3mt</name>
    <name type="synonym">Cyt19</name>
</gene>
<reference key="1">
    <citation type="journal article" date="2002" name="J. Biol. Chem.">
        <title>A novel S-adenosyl-L-methionine:arsenic(III) methyltransferase from rat liver cytosol.</title>
        <authorList>
            <person name="Lin S."/>
            <person name="Shi Q."/>
            <person name="Nix F.B."/>
            <person name="Styblo M."/>
            <person name="Beck M.A."/>
            <person name="Herbin-Davis K.M."/>
            <person name="Hall L.L."/>
            <person name="Simeonsson J.B."/>
            <person name="Thomas D.J."/>
        </authorList>
    </citation>
    <scope>NUCLEOTIDE SEQUENCE [MRNA]</scope>
    <scope>FUNCTION</scope>
    <scope>CATALYTIC ACTIVITY</scope>
    <scope>SUBCELLULAR LOCATION</scope>
    <scope>IDENTIFICATION BY MASS SPECTROMETRY</scope>
    <source>
        <strain>Fischer 344</strain>
        <tissue>Liver</tissue>
    </source>
</reference>
<reference key="2">
    <citation type="journal article" date="2005" name="Toxicol. Appl. Pharmacol.">
        <title>Arsenic (+3 oxidation state) methyltransferase and the inorganic arsenic methylation phenotype.</title>
        <authorList>
            <person name="Li J."/>
            <person name="Waters S.B."/>
            <person name="Drobna Z."/>
            <person name="Devesa V."/>
            <person name="Styblo M."/>
            <person name="Thomas D.J."/>
        </authorList>
    </citation>
    <scope>MUTAGENESIS OF CYS-156</scope>
</reference>
<reference key="3">
    <citation type="journal article" date="2012" name="Nat. Commun.">
        <title>Quantitative maps of protein phosphorylation sites across 14 different rat organs and tissues.</title>
        <authorList>
            <person name="Lundby A."/>
            <person name="Secher A."/>
            <person name="Lage K."/>
            <person name="Nordsborg N.B."/>
            <person name="Dmytriyev A."/>
            <person name="Lundby C."/>
            <person name="Olsen J.V."/>
        </authorList>
    </citation>
    <scope>PHOSPHORYLATION [LARGE SCALE ANALYSIS] AT SER-46</scope>
    <scope>IDENTIFICATION BY MASS SPECTROMETRY [LARGE SCALE ANALYSIS]</scope>
</reference>
<sequence>MAAPRDAEIHKDVQNYYGNVLKTSADLQTNACVTPAKGVPEYIRKSLQNVHEEVISRYYGCGLVVPEHLENCRILDLGSGSGRDCYVLSQLVGQKGHITGIDMTKVQVEVAKAYLEYHTEKFGFQTPNVTFLHGQIEMLAEAGIQKESYDIVISNCVINLVPDKQKVLREVYQVLKYGGELYFSDVYASLEVSEDIKSHKVLWGECLGGALYWKDLAVIAKKIGFCPPRLVTANIITVGNKELERVLGDCRFVSATFRLFKLPKTEPAGRCQVVYNGGIMGHEKELIFDANFTFKEGEAVEVDEETAAILRNSRFAHDFLFTPVEASLLAPQTKVIIRDPFKLAEESDKMKPRCAPEGTGGCCGKRKSC</sequence>
<dbReference type="EC" id="2.1.1.137" evidence="1"/>
<dbReference type="EMBL" id="AF393243">
    <property type="protein sequence ID" value="AAL61609.1"/>
    <property type="molecule type" value="mRNA"/>
</dbReference>
<dbReference type="RefSeq" id="NP_543166.1">
    <property type="nucleotide sequence ID" value="NM_080890.1"/>
</dbReference>
<dbReference type="SMR" id="Q8VHT6"/>
<dbReference type="BioGRID" id="250859">
    <property type="interactions" value="1"/>
</dbReference>
<dbReference type="FunCoup" id="Q8VHT6">
    <property type="interactions" value="82"/>
</dbReference>
<dbReference type="STRING" id="10116.ENSRNOP00000027223"/>
<dbReference type="GlyGen" id="Q8VHT6">
    <property type="glycosylation" value="1 site"/>
</dbReference>
<dbReference type="iPTMnet" id="Q8VHT6"/>
<dbReference type="PhosphoSitePlus" id="Q8VHT6"/>
<dbReference type="PaxDb" id="10116-ENSRNOP00000027223"/>
<dbReference type="GeneID" id="140925"/>
<dbReference type="KEGG" id="rno:140925"/>
<dbReference type="AGR" id="RGD:621325"/>
<dbReference type="CTD" id="57412"/>
<dbReference type="RGD" id="621325">
    <property type="gene designation" value="As3mt"/>
</dbReference>
<dbReference type="eggNOG" id="ENOG502QQD6">
    <property type="taxonomic scope" value="Eukaryota"/>
</dbReference>
<dbReference type="InParanoid" id="Q8VHT6"/>
<dbReference type="OrthoDB" id="8300214at2759"/>
<dbReference type="PhylomeDB" id="Q8VHT6"/>
<dbReference type="BRENDA" id="2.1.1.137">
    <property type="organism ID" value="5301"/>
</dbReference>
<dbReference type="Reactome" id="R-RNO-156581">
    <property type="pathway name" value="Methylation"/>
</dbReference>
<dbReference type="PRO" id="PR:Q8VHT6"/>
<dbReference type="Proteomes" id="UP000002494">
    <property type="component" value="Unplaced"/>
</dbReference>
<dbReference type="GO" id="GO:0005829">
    <property type="term" value="C:cytosol"/>
    <property type="evidence" value="ECO:0000314"/>
    <property type="project" value="UniProtKB"/>
</dbReference>
<dbReference type="GO" id="GO:0030791">
    <property type="term" value="F:arsenite methyltransferase activity"/>
    <property type="evidence" value="ECO:0000314"/>
    <property type="project" value="UniProtKB"/>
</dbReference>
<dbReference type="GO" id="GO:0008276">
    <property type="term" value="F:protein methyltransferase activity"/>
    <property type="evidence" value="ECO:0000304"/>
    <property type="project" value="RGD"/>
</dbReference>
<dbReference type="GO" id="GO:0008757">
    <property type="term" value="F:S-adenosylmethionine-dependent methyltransferase activity"/>
    <property type="evidence" value="ECO:0000304"/>
    <property type="project" value="RGD"/>
</dbReference>
<dbReference type="GO" id="GO:0018872">
    <property type="term" value="P:arsonoacetate metabolic process"/>
    <property type="evidence" value="ECO:0000314"/>
    <property type="project" value="UniProtKB"/>
</dbReference>
<dbReference type="GO" id="GO:0032259">
    <property type="term" value="P:methylation"/>
    <property type="evidence" value="ECO:0000266"/>
    <property type="project" value="RGD"/>
</dbReference>
<dbReference type="GO" id="GO:0046685">
    <property type="term" value="P:response to arsenic-containing substance"/>
    <property type="evidence" value="ECO:0000314"/>
    <property type="project" value="MGI"/>
</dbReference>
<dbReference type="GO" id="GO:0009404">
    <property type="term" value="P:toxin metabolic process"/>
    <property type="evidence" value="ECO:0000314"/>
    <property type="project" value="UniProtKB"/>
</dbReference>
<dbReference type="CDD" id="cd02440">
    <property type="entry name" value="AdoMet_MTases"/>
    <property type="match status" value="1"/>
</dbReference>
<dbReference type="Gene3D" id="3.40.5.100">
    <property type="match status" value="1"/>
</dbReference>
<dbReference type="Gene3D" id="3.40.50.150">
    <property type="entry name" value="Vaccinia Virus protein VP39"/>
    <property type="match status" value="1"/>
</dbReference>
<dbReference type="InterPro" id="IPR026669">
    <property type="entry name" value="Arsenite_MeTrfase-like"/>
</dbReference>
<dbReference type="InterPro" id="IPR025714">
    <property type="entry name" value="Methyltranfer_dom"/>
</dbReference>
<dbReference type="InterPro" id="IPR029063">
    <property type="entry name" value="SAM-dependent_MTases_sf"/>
</dbReference>
<dbReference type="PANTHER" id="PTHR43675">
    <property type="entry name" value="ARSENITE METHYLTRANSFERASE"/>
    <property type="match status" value="1"/>
</dbReference>
<dbReference type="PANTHER" id="PTHR43675:SF8">
    <property type="entry name" value="ARSENITE METHYLTRANSFERASE"/>
    <property type="match status" value="1"/>
</dbReference>
<dbReference type="Pfam" id="PF13847">
    <property type="entry name" value="Methyltransf_31"/>
    <property type="match status" value="1"/>
</dbReference>
<dbReference type="SUPFAM" id="SSF53335">
    <property type="entry name" value="S-adenosyl-L-methionine-dependent methyltransferases"/>
    <property type="match status" value="1"/>
</dbReference>
<proteinExistence type="evidence at protein level"/>
<name>AS3MT_RAT</name>
<feature type="chain" id="PRO_0000204449" description="Arsenite methyltransferase">
    <location>
        <begin position="1"/>
        <end position="369"/>
    </location>
</feature>
<feature type="modified residue" description="Phosphoserine" evidence="4">
    <location>
        <position position="46"/>
    </location>
</feature>
<feature type="mutagenesis site" description="Complete loss of activity." evidence="2">
    <original>C</original>
    <variation>S</variation>
    <location>
        <position position="156"/>
    </location>
</feature>
<keyword id="KW-0963">Cytoplasm</keyword>
<keyword id="KW-0489">Methyltransferase</keyword>
<keyword id="KW-0597">Phosphoprotein</keyword>
<keyword id="KW-1185">Reference proteome</keyword>
<keyword id="KW-0949">S-adenosyl-L-methionine</keyword>
<keyword id="KW-0808">Transferase</keyword>